<gene>
    <name type="ordered locus">MMP1236</name>
</gene>
<proteinExistence type="inferred from homology"/>
<evidence type="ECO:0000255" key="1">
    <source>
        <dbReference type="HAMAP-Rule" id="MF_01079"/>
    </source>
</evidence>
<sequence length="247" mass="26526">MKFFQEKISIKETNILLKVDNPKFFKMAKNTIINERLNLENYILRNPIFLTSYSPVEVPDNAPEIIKLMAEAGFNADVGPMAAVAGTFSQLIIENLIENDCKNAISENGGDICLKCEMDTTVGLYAGNSSLSGNLGFKLKKEKMKNGYGICTSSGTVGHSVSLGNADSITVFSKSAIIADAAATSIGNFAVGNAVDAINKCLEKAETISKIDGVFVCMGEHAGKIGKIPQLIKTDKKEVLGNVFEMV</sequence>
<feature type="chain" id="PRO_0000366702" description="UPF0280 protein MMP1236">
    <location>
        <begin position="1"/>
        <end position="247"/>
    </location>
</feature>
<dbReference type="EMBL" id="BX950229">
    <property type="protein sequence ID" value="CAF30792.1"/>
    <property type="molecule type" value="Genomic_DNA"/>
</dbReference>
<dbReference type="RefSeq" id="WP_011171180.1">
    <property type="nucleotide sequence ID" value="NC_005791.1"/>
</dbReference>
<dbReference type="SMR" id="Q6LXW0"/>
<dbReference type="STRING" id="267377.MMP1236"/>
<dbReference type="EnsemblBacteria" id="CAF30792">
    <property type="protein sequence ID" value="CAF30792"/>
    <property type="gene ID" value="MMP1236"/>
</dbReference>
<dbReference type="GeneID" id="2761894"/>
<dbReference type="KEGG" id="mmp:MMP1236"/>
<dbReference type="PATRIC" id="fig|267377.15.peg.1269"/>
<dbReference type="eggNOG" id="arCOG04376">
    <property type="taxonomic scope" value="Archaea"/>
</dbReference>
<dbReference type="HOGENOM" id="CLU_074757_0_0_2"/>
<dbReference type="OrthoDB" id="50299at2157"/>
<dbReference type="Proteomes" id="UP000000590">
    <property type="component" value="Chromosome"/>
</dbReference>
<dbReference type="Gene3D" id="3.10.520.10">
    <property type="entry name" value="ApbE-like domains"/>
    <property type="match status" value="1"/>
</dbReference>
<dbReference type="HAMAP" id="MF_01079">
    <property type="entry name" value="UPF0280"/>
    <property type="match status" value="1"/>
</dbReference>
<dbReference type="InterPro" id="IPR003374">
    <property type="entry name" value="ApbE-like_sf"/>
</dbReference>
<dbReference type="InterPro" id="IPR037456">
    <property type="entry name" value="MA1715-like"/>
</dbReference>
<dbReference type="InterPro" id="IPR007183">
    <property type="entry name" value="UPF0280"/>
</dbReference>
<dbReference type="NCBIfam" id="NF003321">
    <property type="entry name" value="PRK04334.1-1"/>
    <property type="match status" value="1"/>
</dbReference>
<dbReference type="PIRSF" id="PIRSF006421">
    <property type="entry name" value="UCP006421"/>
    <property type="match status" value="1"/>
</dbReference>
<dbReference type="SUPFAM" id="SSF143631">
    <property type="entry name" value="ApbE-like"/>
    <property type="match status" value="1"/>
</dbReference>
<reference key="1">
    <citation type="journal article" date="2004" name="J. Bacteriol.">
        <title>Complete genome sequence of the genetically tractable hydrogenotrophic methanogen Methanococcus maripaludis.</title>
        <authorList>
            <person name="Hendrickson E.L."/>
            <person name="Kaul R."/>
            <person name="Zhou Y."/>
            <person name="Bovee D."/>
            <person name="Chapman P."/>
            <person name="Chung J."/>
            <person name="Conway de Macario E."/>
            <person name="Dodsworth J.A."/>
            <person name="Gillett W."/>
            <person name="Graham D.E."/>
            <person name="Hackett M."/>
            <person name="Haydock A.K."/>
            <person name="Kang A."/>
            <person name="Land M.L."/>
            <person name="Levy R."/>
            <person name="Lie T.J."/>
            <person name="Major T.A."/>
            <person name="Moore B.C."/>
            <person name="Porat I."/>
            <person name="Palmeiri A."/>
            <person name="Rouse G."/>
            <person name="Saenphimmachak C."/>
            <person name="Soell D."/>
            <person name="Van Dien S."/>
            <person name="Wang T."/>
            <person name="Whitman W.B."/>
            <person name="Xia Q."/>
            <person name="Zhang Y."/>
            <person name="Larimer F.W."/>
            <person name="Olson M.V."/>
            <person name="Leigh J.A."/>
        </authorList>
    </citation>
    <scope>NUCLEOTIDE SEQUENCE [LARGE SCALE GENOMIC DNA]</scope>
    <source>
        <strain>DSM 14266 / JCM 13030 / NBRC 101832 / S2 / LL</strain>
    </source>
</reference>
<comment type="similarity">
    <text evidence="1">Belongs to the UPF0280 family.</text>
</comment>
<accession>Q6LXW0</accession>
<name>Y1236_METMP</name>
<protein>
    <recommendedName>
        <fullName evidence="1">UPF0280 protein MMP1236</fullName>
    </recommendedName>
</protein>
<organism>
    <name type="scientific">Methanococcus maripaludis (strain DSM 14266 / JCM 13030 / NBRC 101832 / S2 / LL)</name>
    <dbReference type="NCBI Taxonomy" id="267377"/>
    <lineage>
        <taxon>Archaea</taxon>
        <taxon>Methanobacteriati</taxon>
        <taxon>Methanobacteriota</taxon>
        <taxon>Methanomada group</taxon>
        <taxon>Methanococci</taxon>
        <taxon>Methanococcales</taxon>
        <taxon>Methanococcaceae</taxon>
        <taxon>Methanococcus</taxon>
    </lineage>
</organism>
<keyword id="KW-1185">Reference proteome</keyword>